<gene>
    <name evidence="1" type="primary">thyA</name>
    <name type="ordered locus">MCA2728</name>
</gene>
<accession>Q603S2</accession>
<keyword id="KW-0963">Cytoplasm</keyword>
<keyword id="KW-0489">Methyltransferase</keyword>
<keyword id="KW-0545">Nucleotide biosynthesis</keyword>
<keyword id="KW-1185">Reference proteome</keyword>
<keyword id="KW-0808">Transferase</keyword>
<feature type="chain" id="PRO_0000140980" description="Thymidylate synthase">
    <location>
        <begin position="1"/>
        <end position="260"/>
    </location>
</feature>
<feature type="active site" description="Nucleophile" evidence="1">
    <location>
        <position position="142"/>
    </location>
</feature>
<feature type="binding site" description="in other chain" evidence="1">
    <location>
        <position position="21"/>
    </location>
    <ligand>
        <name>dUMP</name>
        <dbReference type="ChEBI" id="CHEBI:246422"/>
        <note>ligand shared between dimeric partners</note>
    </ligand>
</feature>
<feature type="binding site" evidence="1">
    <location>
        <position position="51"/>
    </location>
    <ligand>
        <name>(6R)-5,10-methylene-5,6,7,8-tetrahydrofolate</name>
        <dbReference type="ChEBI" id="CHEBI:15636"/>
    </ligand>
</feature>
<feature type="binding site" evidence="1">
    <location>
        <begin position="122"/>
        <end position="123"/>
    </location>
    <ligand>
        <name>dUMP</name>
        <dbReference type="ChEBI" id="CHEBI:246422"/>
        <note>ligand shared between dimeric partners</note>
    </ligand>
</feature>
<feature type="binding site" description="in other chain" evidence="1">
    <location>
        <begin position="162"/>
        <end position="165"/>
    </location>
    <ligand>
        <name>dUMP</name>
        <dbReference type="ChEBI" id="CHEBI:246422"/>
        <note>ligand shared between dimeric partners</note>
    </ligand>
</feature>
<feature type="binding site" evidence="1">
    <location>
        <position position="165"/>
    </location>
    <ligand>
        <name>(6R)-5,10-methylene-5,6,7,8-tetrahydrofolate</name>
        <dbReference type="ChEBI" id="CHEBI:15636"/>
    </ligand>
</feature>
<feature type="binding site" description="in other chain" evidence="1">
    <location>
        <position position="173"/>
    </location>
    <ligand>
        <name>dUMP</name>
        <dbReference type="ChEBI" id="CHEBI:246422"/>
        <note>ligand shared between dimeric partners</note>
    </ligand>
</feature>
<feature type="binding site" description="in other chain" evidence="1">
    <location>
        <begin position="203"/>
        <end position="205"/>
    </location>
    <ligand>
        <name>dUMP</name>
        <dbReference type="ChEBI" id="CHEBI:246422"/>
        <note>ligand shared between dimeric partners</note>
    </ligand>
</feature>
<feature type="binding site" evidence="1">
    <location>
        <position position="259"/>
    </location>
    <ligand>
        <name>(6R)-5,10-methylene-5,6,7,8-tetrahydrofolate</name>
        <dbReference type="ChEBI" id="CHEBI:15636"/>
    </ligand>
</feature>
<dbReference type="EC" id="2.1.1.45" evidence="1"/>
<dbReference type="EMBL" id="AE017282">
    <property type="protein sequence ID" value="AAU91198.1"/>
    <property type="molecule type" value="Genomic_DNA"/>
</dbReference>
<dbReference type="RefSeq" id="WP_010961934.1">
    <property type="nucleotide sequence ID" value="NC_002977.6"/>
</dbReference>
<dbReference type="SMR" id="Q603S2"/>
<dbReference type="STRING" id="243233.MCA2728"/>
<dbReference type="GeneID" id="88224908"/>
<dbReference type="KEGG" id="mca:MCA2728"/>
<dbReference type="eggNOG" id="COG0207">
    <property type="taxonomic scope" value="Bacteria"/>
</dbReference>
<dbReference type="HOGENOM" id="CLU_021669_0_0_6"/>
<dbReference type="UniPathway" id="UPA00575"/>
<dbReference type="Proteomes" id="UP000006821">
    <property type="component" value="Chromosome"/>
</dbReference>
<dbReference type="GO" id="GO:0005829">
    <property type="term" value="C:cytosol"/>
    <property type="evidence" value="ECO:0007669"/>
    <property type="project" value="TreeGrafter"/>
</dbReference>
<dbReference type="GO" id="GO:0004799">
    <property type="term" value="F:thymidylate synthase activity"/>
    <property type="evidence" value="ECO:0007669"/>
    <property type="project" value="UniProtKB-UniRule"/>
</dbReference>
<dbReference type="GO" id="GO:0006231">
    <property type="term" value="P:dTMP biosynthetic process"/>
    <property type="evidence" value="ECO:0007669"/>
    <property type="project" value="UniProtKB-UniRule"/>
</dbReference>
<dbReference type="GO" id="GO:0006235">
    <property type="term" value="P:dTTP biosynthetic process"/>
    <property type="evidence" value="ECO:0007669"/>
    <property type="project" value="UniProtKB-UniRule"/>
</dbReference>
<dbReference type="GO" id="GO:0032259">
    <property type="term" value="P:methylation"/>
    <property type="evidence" value="ECO:0007669"/>
    <property type="project" value="UniProtKB-KW"/>
</dbReference>
<dbReference type="CDD" id="cd00351">
    <property type="entry name" value="TS_Pyrimidine_HMase"/>
    <property type="match status" value="1"/>
</dbReference>
<dbReference type="Gene3D" id="3.30.572.10">
    <property type="entry name" value="Thymidylate synthase/dCMP hydroxymethylase domain"/>
    <property type="match status" value="1"/>
</dbReference>
<dbReference type="HAMAP" id="MF_00008">
    <property type="entry name" value="Thymidy_synth_bact"/>
    <property type="match status" value="1"/>
</dbReference>
<dbReference type="InterPro" id="IPR045097">
    <property type="entry name" value="Thymidate_synth/dCMP_Mease"/>
</dbReference>
<dbReference type="InterPro" id="IPR023451">
    <property type="entry name" value="Thymidate_synth/dCMP_Mease_dom"/>
</dbReference>
<dbReference type="InterPro" id="IPR036926">
    <property type="entry name" value="Thymidate_synth/dCMP_Mease_sf"/>
</dbReference>
<dbReference type="InterPro" id="IPR000398">
    <property type="entry name" value="Thymidylate_synthase"/>
</dbReference>
<dbReference type="NCBIfam" id="NF002497">
    <property type="entry name" value="PRK01827.1-3"/>
    <property type="match status" value="1"/>
</dbReference>
<dbReference type="NCBIfam" id="TIGR03284">
    <property type="entry name" value="thym_sym"/>
    <property type="match status" value="2"/>
</dbReference>
<dbReference type="PANTHER" id="PTHR11548:SF9">
    <property type="entry name" value="THYMIDYLATE SYNTHASE"/>
    <property type="match status" value="1"/>
</dbReference>
<dbReference type="PANTHER" id="PTHR11548">
    <property type="entry name" value="THYMIDYLATE SYNTHASE 1"/>
    <property type="match status" value="1"/>
</dbReference>
<dbReference type="Pfam" id="PF00303">
    <property type="entry name" value="Thymidylat_synt"/>
    <property type="match status" value="1"/>
</dbReference>
<dbReference type="PRINTS" id="PR00108">
    <property type="entry name" value="THYMDSNTHASE"/>
</dbReference>
<dbReference type="SUPFAM" id="SSF55831">
    <property type="entry name" value="Thymidylate synthase/dCMP hydroxymethylase"/>
    <property type="match status" value="1"/>
</dbReference>
<reference key="1">
    <citation type="journal article" date="2004" name="PLoS Biol.">
        <title>Genomic insights into methanotrophy: the complete genome sequence of Methylococcus capsulatus (Bath).</title>
        <authorList>
            <person name="Ward N.L."/>
            <person name="Larsen O."/>
            <person name="Sakwa J."/>
            <person name="Bruseth L."/>
            <person name="Khouri H.M."/>
            <person name="Durkin A.S."/>
            <person name="Dimitrov G."/>
            <person name="Jiang L."/>
            <person name="Scanlan D."/>
            <person name="Kang K.H."/>
            <person name="Lewis M.R."/>
            <person name="Nelson K.E."/>
            <person name="Methe B.A."/>
            <person name="Wu M."/>
            <person name="Heidelberg J.F."/>
            <person name="Paulsen I.T."/>
            <person name="Fouts D.E."/>
            <person name="Ravel J."/>
            <person name="Tettelin H."/>
            <person name="Ren Q."/>
            <person name="Read T.D."/>
            <person name="DeBoy R.T."/>
            <person name="Seshadri R."/>
            <person name="Salzberg S.L."/>
            <person name="Jensen H.B."/>
            <person name="Birkeland N.K."/>
            <person name="Nelson W.C."/>
            <person name="Dodson R.J."/>
            <person name="Grindhaug S.H."/>
            <person name="Holt I.E."/>
            <person name="Eidhammer I."/>
            <person name="Jonasen I."/>
            <person name="Vanaken S."/>
            <person name="Utterback T.R."/>
            <person name="Feldblyum T.V."/>
            <person name="Fraser C.M."/>
            <person name="Lillehaug J.R."/>
            <person name="Eisen J.A."/>
        </authorList>
    </citation>
    <scope>NUCLEOTIDE SEQUENCE [LARGE SCALE GENOMIC DNA]</scope>
    <source>
        <strain>ATCC 33009 / NCIMB 11132 / Bath</strain>
    </source>
</reference>
<evidence type="ECO:0000255" key="1">
    <source>
        <dbReference type="HAMAP-Rule" id="MF_00008"/>
    </source>
</evidence>
<protein>
    <recommendedName>
        <fullName evidence="1">Thymidylate synthase</fullName>
        <shortName evidence="1">TS</shortName>
        <shortName evidence="1">TSase</shortName>
        <ecNumber evidence="1">2.1.1.45</ecNumber>
    </recommendedName>
</protein>
<sequence>MRPYLDLLRDILDHGCPKGDRTGTGTLSVFGRMMRFDLSRGLPLVTTKKLHLPSIIHELLWFVSGSTNVRDLQRHGVTIWDEWADDNGELGPVYGRQWRNWNGAIDQLAGLVEQLRRNPGSRRLLVSAWNPSDLDAMALPPCHYAFQCHVADGRLSLMFQMRSADVFLGLPFNIAGYALLTHMLAQQTGYEPGELIWCGGDVHLYLNHLEQARLQLTREPYPPPTLKLARKPGSLFDYRYEDFVVEDYQAHPHIKAAVAV</sequence>
<name>TYSY_METCA</name>
<organism>
    <name type="scientific">Methylococcus capsulatus (strain ATCC 33009 / NCIMB 11132 / Bath)</name>
    <dbReference type="NCBI Taxonomy" id="243233"/>
    <lineage>
        <taxon>Bacteria</taxon>
        <taxon>Pseudomonadati</taxon>
        <taxon>Pseudomonadota</taxon>
        <taxon>Gammaproteobacteria</taxon>
        <taxon>Methylococcales</taxon>
        <taxon>Methylococcaceae</taxon>
        <taxon>Methylococcus</taxon>
    </lineage>
</organism>
<comment type="function">
    <text evidence="1">Catalyzes the reductive methylation of 2'-deoxyuridine-5'-monophosphate (dUMP) to 2'-deoxythymidine-5'-monophosphate (dTMP) while utilizing 5,10-methylenetetrahydrofolate (mTHF) as the methyl donor and reductant in the reaction, yielding dihydrofolate (DHF) as a by-product. This enzymatic reaction provides an intracellular de novo source of dTMP, an essential precursor for DNA biosynthesis.</text>
</comment>
<comment type="catalytic activity">
    <reaction evidence="1">
        <text>dUMP + (6R)-5,10-methylene-5,6,7,8-tetrahydrofolate = 7,8-dihydrofolate + dTMP</text>
        <dbReference type="Rhea" id="RHEA:12104"/>
        <dbReference type="ChEBI" id="CHEBI:15636"/>
        <dbReference type="ChEBI" id="CHEBI:57451"/>
        <dbReference type="ChEBI" id="CHEBI:63528"/>
        <dbReference type="ChEBI" id="CHEBI:246422"/>
        <dbReference type="EC" id="2.1.1.45"/>
    </reaction>
</comment>
<comment type="pathway">
    <text evidence="1">Pyrimidine metabolism; dTTP biosynthesis.</text>
</comment>
<comment type="subunit">
    <text evidence="1">Homodimer.</text>
</comment>
<comment type="subcellular location">
    <subcellularLocation>
        <location evidence="1">Cytoplasm</location>
    </subcellularLocation>
</comment>
<comment type="similarity">
    <text evidence="1">Belongs to the thymidylate synthase family. Bacterial-type ThyA subfamily.</text>
</comment>
<proteinExistence type="inferred from homology"/>